<evidence type="ECO:0000255" key="1">
    <source>
        <dbReference type="PROSITE-ProRule" id="PRU00108"/>
    </source>
</evidence>
<evidence type="ECO:0000256" key="2">
    <source>
        <dbReference type="SAM" id="MobiDB-lite"/>
    </source>
</evidence>
<evidence type="ECO:0000305" key="3"/>
<dbReference type="EMBL" id="X17612">
    <property type="protein sequence ID" value="CAA35614.1"/>
    <property type="molecule type" value="mRNA"/>
</dbReference>
<dbReference type="PIR" id="S10092">
    <property type="entry name" value="S10092"/>
</dbReference>
<dbReference type="RefSeq" id="NP_990624.1">
    <property type="nucleotide sequence ID" value="NM_205293.3"/>
</dbReference>
<dbReference type="SMR" id="P14840"/>
<dbReference type="FunCoup" id="P14840">
    <property type="interactions" value="318"/>
</dbReference>
<dbReference type="STRING" id="9031.ENSGALP00000073243"/>
<dbReference type="PaxDb" id="9031-ENSGALP00000000372"/>
<dbReference type="GeneID" id="396230"/>
<dbReference type="KEGG" id="gga:396230"/>
<dbReference type="CTD" id="3214"/>
<dbReference type="VEuPathDB" id="HostDB:geneid_396230"/>
<dbReference type="eggNOG" id="KOG0489">
    <property type="taxonomic scope" value="Eukaryota"/>
</dbReference>
<dbReference type="InParanoid" id="P14840"/>
<dbReference type="OrthoDB" id="6159439at2759"/>
<dbReference type="PhylomeDB" id="P14840"/>
<dbReference type="PRO" id="PR:P14840"/>
<dbReference type="Proteomes" id="UP000000539">
    <property type="component" value="Chromosome 27"/>
</dbReference>
<dbReference type="Bgee" id="ENSGALG00000000284">
    <property type="expression patterns" value="Expressed in ovary and 10 other cell types or tissues"/>
</dbReference>
<dbReference type="GO" id="GO:0005654">
    <property type="term" value="C:nucleoplasm"/>
    <property type="evidence" value="ECO:0000318"/>
    <property type="project" value="GO_Central"/>
</dbReference>
<dbReference type="GO" id="GO:0000981">
    <property type="term" value="F:DNA-binding transcription factor activity, RNA polymerase II-specific"/>
    <property type="evidence" value="ECO:0000318"/>
    <property type="project" value="GO_Central"/>
</dbReference>
<dbReference type="GO" id="GO:0000978">
    <property type="term" value="F:RNA polymerase II cis-regulatory region sequence-specific DNA binding"/>
    <property type="evidence" value="ECO:0000318"/>
    <property type="project" value="GO_Central"/>
</dbReference>
<dbReference type="GO" id="GO:0009952">
    <property type="term" value="P:anterior/posterior pattern specification"/>
    <property type="evidence" value="ECO:0000318"/>
    <property type="project" value="GO_Central"/>
</dbReference>
<dbReference type="GO" id="GO:0048704">
    <property type="term" value="P:embryonic skeletal system morphogenesis"/>
    <property type="evidence" value="ECO:0000318"/>
    <property type="project" value="GO_Central"/>
</dbReference>
<dbReference type="GO" id="GO:0045944">
    <property type="term" value="P:positive regulation of transcription by RNA polymerase II"/>
    <property type="evidence" value="ECO:0000318"/>
    <property type="project" value="GO_Central"/>
</dbReference>
<dbReference type="CDD" id="cd00086">
    <property type="entry name" value="homeodomain"/>
    <property type="match status" value="1"/>
</dbReference>
<dbReference type="FunFam" id="1.10.10.60:FF:000029">
    <property type="entry name" value="Homeobox protein Hox-D4"/>
    <property type="match status" value="1"/>
</dbReference>
<dbReference type="Gene3D" id="1.10.10.60">
    <property type="entry name" value="Homeodomain-like"/>
    <property type="match status" value="1"/>
</dbReference>
<dbReference type="InterPro" id="IPR050609">
    <property type="entry name" value="Antp_homeobox_Deformed_sf"/>
</dbReference>
<dbReference type="InterPro" id="IPR001356">
    <property type="entry name" value="HD"/>
</dbReference>
<dbReference type="InterPro" id="IPR020479">
    <property type="entry name" value="HD_metazoa"/>
</dbReference>
<dbReference type="InterPro" id="IPR017995">
    <property type="entry name" value="Homeobox_antennapedia"/>
</dbReference>
<dbReference type="InterPro" id="IPR001827">
    <property type="entry name" value="Homeobox_Antennapedia_CS"/>
</dbReference>
<dbReference type="InterPro" id="IPR017970">
    <property type="entry name" value="Homeobox_CS"/>
</dbReference>
<dbReference type="InterPro" id="IPR009057">
    <property type="entry name" value="Homeodomain-like_sf"/>
</dbReference>
<dbReference type="PANTHER" id="PTHR45771:SF3">
    <property type="entry name" value="HOMEOBOX PROTEIN HOX-B4"/>
    <property type="match status" value="1"/>
</dbReference>
<dbReference type="PANTHER" id="PTHR45771">
    <property type="entry name" value="HOMEOTIC PROTEIN DEFORMED"/>
    <property type="match status" value="1"/>
</dbReference>
<dbReference type="Pfam" id="PF00046">
    <property type="entry name" value="Homeodomain"/>
    <property type="match status" value="1"/>
</dbReference>
<dbReference type="PRINTS" id="PR00025">
    <property type="entry name" value="ANTENNAPEDIA"/>
</dbReference>
<dbReference type="PRINTS" id="PR00024">
    <property type="entry name" value="HOMEOBOX"/>
</dbReference>
<dbReference type="SMART" id="SM00389">
    <property type="entry name" value="HOX"/>
    <property type="match status" value="1"/>
</dbReference>
<dbReference type="SUPFAM" id="SSF46689">
    <property type="entry name" value="Homeodomain-like"/>
    <property type="match status" value="1"/>
</dbReference>
<dbReference type="PROSITE" id="PS00032">
    <property type="entry name" value="ANTENNAPEDIA"/>
    <property type="match status" value="1"/>
</dbReference>
<dbReference type="PROSITE" id="PS00027">
    <property type="entry name" value="HOMEOBOX_1"/>
    <property type="match status" value="1"/>
</dbReference>
<dbReference type="PROSITE" id="PS50071">
    <property type="entry name" value="HOMEOBOX_2"/>
    <property type="match status" value="1"/>
</dbReference>
<feature type="chain" id="PRO_0000200124" description="Homeobox protein Hox-B4">
    <location>
        <begin position="1"/>
        <end position="245"/>
    </location>
</feature>
<feature type="DNA-binding region" description="Homeobox" evidence="1">
    <location>
        <begin position="150"/>
        <end position="209"/>
    </location>
</feature>
<feature type="region of interest" description="Disordered" evidence="2">
    <location>
        <begin position="31"/>
        <end position="52"/>
    </location>
</feature>
<feature type="region of interest" description="Disordered" evidence="2">
    <location>
        <begin position="69"/>
        <end position="122"/>
    </location>
</feature>
<feature type="region of interest" description="Disordered" evidence="2">
    <location>
        <begin position="208"/>
        <end position="245"/>
    </location>
</feature>
<feature type="short sequence motif" description="Antp-type hexapeptide">
    <location>
        <begin position="129"/>
        <end position="134"/>
    </location>
</feature>
<feature type="compositionally biased region" description="Low complexity" evidence="2">
    <location>
        <begin position="110"/>
        <end position="122"/>
    </location>
</feature>
<feature type="compositionally biased region" description="Polar residues" evidence="2">
    <location>
        <begin position="215"/>
        <end position="227"/>
    </location>
</feature>
<feature type="compositionally biased region" description="Low complexity" evidence="2">
    <location>
        <begin position="230"/>
        <end position="245"/>
    </location>
</feature>
<proteinExistence type="evidence at transcript level"/>
<protein>
    <recommendedName>
        <fullName>Homeobox protein Hox-B4</fullName>
    </recommendedName>
    <alternativeName>
        <fullName>Homeobox protein Hox-Z</fullName>
        <shortName>Chox-Z</shortName>
    </alternativeName>
</protein>
<reference key="1">
    <citation type="journal article" date="1990" name="Nucleic Acids Res.">
        <title>The nucleotide sequence of the cDNA encoding a chicken Deformed family homeobox gene, Chox-Z.</title>
        <authorList>
            <person name="Sasaki H."/>
            <person name="Kuroiwa A."/>
        </authorList>
    </citation>
    <scope>NUCLEOTIDE SEQUENCE [MRNA]</scope>
</reference>
<accession>P14840</accession>
<comment type="function">
    <text>Sequence-specific transcription factor which is part of a developmental regulatory system that provides cells with specific positional identities on the anterior-posterior axis.</text>
</comment>
<comment type="subcellular location">
    <subcellularLocation>
        <location>Nucleus</location>
    </subcellularLocation>
</comment>
<comment type="similarity">
    <text evidence="3">Belongs to the Antp homeobox family. Deformed subfamily.</text>
</comment>
<keyword id="KW-0217">Developmental protein</keyword>
<keyword id="KW-0238">DNA-binding</keyword>
<keyword id="KW-0371">Homeobox</keyword>
<keyword id="KW-0539">Nucleus</keyword>
<keyword id="KW-1185">Reference proteome</keyword>
<keyword id="KW-0804">Transcription</keyword>
<keyword id="KW-0805">Transcription regulation</keyword>
<organism>
    <name type="scientific">Gallus gallus</name>
    <name type="common">Chicken</name>
    <dbReference type="NCBI Taxonomy" id="9031"/>
    <lineage>
        <taxon>Eukaryota</taxon>
        <taxon>Metazoa</taxon>
        <taxon>Chordata</taxon>
        <taxon>Craniata</taxon>
        <taxon>Vertebrata</taxon>
        <taxon>Euteleostomi</taxon>
        <taxon>Archelosauria</taxon>
        <taxon>Archosauria</taxon>
        <taxon>Dinosauria</taxon>
        <taxon>Saurischia</taxon>
        <taxon>Theropoda</taxon>
        <taxon>Coelurosauria</taxon>
        <taxon>Aves</taxon>
        <taxon>Neognathae</taxon>
        <taxon>Galloanserae</taxon>
        <taxon>Galliformes</taxon>
        <taxon>Phasianidae</taxon>
        <taxon>Phasianinae</taxon>
        <taxon>Gallus</taxon>
    </lineage>
</organism>
<name>HXB4_CHICK</name>
<sequence>MAMSSFLINSNYVDPKFPPCEEYSHSDYLPNHSPEYYSSQRRESTFQHEAMYQPRSACSEQLYPSCQSSGHQAAVLSPRGHVHPPAGLQSHLSEPNHPCEPGTPSPPPSCSQNSLNQSPSNSSCKEPVVYPWMKKVHVSTVNPNYSGGEPKRSRTAYTRQQVLELEKEFHYNRYLTRRRRVEIAHSLCLSERQIKIWFQNRRMKWKKDHKLPNTKIRSNPSSSSASLQIPPAASQSRSSGPASSL</sequence>
<gene>
    <name type="primary">HOXB4</name>
    <name type="synonym">CHOX-Z</name>
</gene>